<name>GPDA_ACTP2</name>
<keyword id="KW-0963">Cytoplasm</keyword>
<keyword id="KW-0444">Lipid biosynthesis</keyword>
<keyword id="KW-0443">Lipid metabolism</keyword>
<keyword id="KW-0520">NAD</keyword>
<keyword id="KW-0521">NADP</keyword>
<keyword id="KW-0547">Nucleotide-binding</keyword>
<keyword id="KW-0560">Oxidoreductase</keyword>
<keyword id="KW-0594">Phospholipid biosynthesis</keyword>
<keyword id="KW-1208">Phospholipid metabolism</keyword>
<keyword id="KW-1185">Reference proteome</keyword>
<gene>
    <name evidence="1" type="primary">gpsA</name>
    <name type="ordered locus">APL_1510</name>
</gene>
<evidence type="ECO:0000255" key="1">
    <source>
        <dbReference type="HAMAP-Rule" id="MF_00394"/>
    </source>
</evidence>
<dbReference type="EC" id="1.1.1.94" evidence="1"/>
<dbReference type="EMBL" id="CP000569">
    <property type="protein sequence ID" value="ABN74594.1"/>
    <property type="molecule type" value="Genomic_DNA"/>
</dbReference>
<dbReference type="RefSeq" id="WP_005598771.1">
    <property type="nucleotide sequence ID" value="NC_009053.1"/>
</dbReference>
<dbReference type="SMR" id="A3N2F8"/>
<dbReference type="STRING" id="416269.APL_1510"/>
<dbReference type="EnsemblBacteria" id="ABN74594">
    <property type="protein sequence ID" value="ABN74594"/>
    <property type="gene ID" value="APL_1510"/>
</dbReference>
<dbReference type="GeneID" id="48599776"/>
<dbReference type="KEGG" id="apl:APL_1510"/>
<dbReference type="eggNOG" id="COG0240">
    <property type="taxonomic scope" value="Bacteria"/>
</dbReference>
<dbReference type="HOGENOM" id="CLU_033449_0_2_6"/>
<dbReference type="UniPathway" id="UPA00940"/>
<dbReference type="Proteomes" id="UP000001432">
    <property type="component" value="Chromosome"/>
</dbReference>
<dbReference type="GO" id="GO:0005829">
    <property type="term" value="C:cytosol"/>
    <property type="evidence" value="ECO:0007669"/>
    <property type="project" value="TreeGrafter"/>
</dbReference>
<dbReference type="GO" id="GO:0047952">
    <property type="term" value="F:glycerol-3-phosphate dehydrogenase [NAD(P)+] activity"/>
    <property type="evidence" value="ECO:0007669"/>
    <property type="project" value="UniProtKB-UniRule"/>
</dbReference>
<dbReference type="GO" id="GO:0051287">
    <property type="term" value="F:NAD binding"/>
    <property type="evidence" value="ECO:0007669"/>
    <property type="project" value="InterPro"/>
</dbReference>
<dbReference type="GO" id="GO:0005975">
    <property type="term" value="P:carbohydrate metabolic process"/>
    <property type="evidence" value="ECO:0007669"/>
    <property type="project" value="InterPro"/>
</dbReference>
<dbReference type="GO" id="GO:0046167">
    <property type="term" value="P:glycerol-3-phosphate biosynthetic process"/>
    <property type="evidence" value="ECO:0007669"/>
    <property type="project" value="UniProtKB-UniRule"/>
</dbReference>
<dbReference type="GO" id="GO:0046168">
    <property type="term" value="P:glycerol-3-phosphate catabolic process"/>
    <property type="evidence" value="ECO:0007669"/>
    <property type="project" value="InterPro"/>
</dbReference>
<dbReference type="GO" id="GO:0046474">
    <property type="term" value="P:glycerophospholipid biosynthetic process"/>
    <property type="evidence" value="ECO:0007669"/>
    <property type="project" value="TreeGrafter"/>
</dbReference>
<dbReference type="FunFam" id="1.10.1040.10:FF:000001">
    <property type="entry name" value="Glycerol-3-phosphate dehydrogenase [NAD(P)+]"/>
    <property type="match status" value="1"/>
</dbReference>
<dbReference type="FunFam" id="3.40.50.720:FF:000019">
    <property type="entry name" value="Glycerol-3-phosphate dehydrogenase [NAD(P)+]"/>
    <property type="match status" value="1"/>
</dbReference>
<dbReference type="Gene3D" id="1.10.1040.10">
    <property type="entry name" value="N-(1-d-carboxylethyl)-l-norvaline Dehydrogenase, domain 2"/>
    <property type="match status" value="1"/>
</dbReference>
<dbReference type="Gene3D" id="3.40.50.720">
    <property type="entry name" value="NAD(P)-binding Rossmann-like Domain"/>
    <property type="match status" value="1"/>
</dbReference>
<dbReference type="HAMAP" id="MF_00394">
    <property type="entry name" value="NAD_Glyc3P_dehydrog"/>
    <property type="match status" value="1"/>
</dbReference>
<dbReference type="InterPro" id="IPR008927">
    <property type="entry name" value="6-PGluconate_DH-like_C_sf"/>
</dbReference>
<dbReference type="InterPro" id="IPR013328">
    <property type="entry name" value="6PGD_dom2"/>
</dbReference>
<dbReference type="InterPro" id="IPR006168">
    <property type="entry name" value="G3P_DH_NAD-dep"/>
</dbReference>
<dbReference type="InterPro" id="IPR006109">
    <property type="entry name" value="G3P_DH_NAD-dep_C"/>
</dbReference>
<dbReference type="InterPro" id="IPR011128">
    <property type="entry name" value="G3P_DH_NAD-dep_N"/>
</dbReference>
<dbReference type="InterPro" id="IPR036291">
    <property type="entry name" value="NAD(P)-bd_dom_sf"/>
</dbReference>
<dbReference type="NCBIfam" id="NF000939">
    <property type="entry name" value="PRK00094.1-1"/>
    <property type="match status" value="1"/>
</dbReference>
<dbReference type="NCBIfam" id="NF000940">
    <property type="entry name" value="PRK00094.1-2"/>
    <property type="match status" value="1"/>
</dbReference>
<dbReference type="NCBIfam" id="NF000942">
    <property type="entry name" value="PRK00094.1-4"/>
    <property type="match status" value="1"/>
</dbReference>
<dbReference type="PANTHER" id="PTHR11728">
    <property type="entry name" value="GLYCEROL-3-PHOSPHATE DEHYDROGENASE"/>
    <property type="match status" value="1"/>
</dbReference>
<dbReference type="PANTHER" id="PTHR11728:SF1">
    <property type="entry name" value="GLYCEROL-3-PHOSPHATE DEHYDROGENASE [NAD(+)] 2, CHLOROPLASTIC"/>
    <property type="match status" value="1"/>
</dbReference>
<dbReference type="Pfam" id="PF07479">
    <property type="entry name" value="NAD_Gly3P_dh_C"/>
    <property type="match status" value="1"/>
</dbReference>
<dbReference type="Pfam" id="PF01210">
    <property type="entry name" value="NAD_Gly3P_dh_N"/>
    <property type="match status" value="1"/>
</dbReference>
<dbReference type="PIRSF" id="PIRSF000114">
    <property type="entry name" value="Glycerol-3-P_dh"/>
    <property type="match status" value="1"/>
</dbReference>
<dbReference type="PRINTS" id="PR00077">
    <property type="entry name" value="GPDHDRGNASE"/>
</dbReference>
<dbReference type="SUPFAM" id="SSF48179">
    <property type="entry name" value="6-phosphogluconate dehydrogenase C-terminal domain-like"/>
    <property type="match status" value="1"/>
</dbReference>
<dbReference type="SUPFAM" id="SSF51735">
    <property type="entry name" value="NAD(P)-binding Rossmann-fold domains"/>
    <property type="match status" value="1"/>
</dbReference>
<dbReference type="PROSITE" id="PS00957">
    <property type="entry name" value="NAD_G3PDH"/>
    <property type="match status" value="1"/>
</dbReference>
<sequence>MSEMYSAPVTVLGAGSYGTALAIALARNGHKTYLWGHQPEKMAVLATERMNNAFLPDIAFPDALEIESDLVQAIAKAKDILIVVPSHVFADVLKQIKPLLSAHHRIMWATKGLERNTGRLLQTVAQEILGNQYPLAVLSGPTFAKELAQGLPTAIALSSTDSQFADEMQQRIHCAKAFRVYLNNDMIGVQLGGAIKNVIAIGAGISDGMGFGANARTALITRGLAEISRLGASLGANANTFMGMAGLGDLVLTCTDNQSRNRRFGLMLGQGKSAEEAMAEIGQVVEGFYNTKEAYLLAQTQGVEMPIVEQIYQMLFCGKNAHDVATSLLGRERKGE</sequence>
<reference key="1">
    <citation type="journal article" date="2008" name="J. Bacteriol.">
        <title>The complete genome sequence of Actinobacillus pleuropneumoniae L20 (serotype 5b).</title>
        <authorList>
            <person name="Foote S.J."/>
            <person name="Bosse J.T."/>
            <person name="Bouevitch A.B."/>
            <person name="Langford P.R."/>
            <person name="Young N.M."/>
            <person name="Nash J.H.E."/>
        </authorList>
    </citation>
    <scope>NUCLEOTIDE SEQUENCE [LARGE SCALE GENOMIC DNA]</scope>
    <source>
        <strain>L20</strain>
    </source>
</reference>
<accession>A3N2F8</accession>
<protein>
    <recommendedName>
        <fullName evidence="1">Glycerol-3-phosphate dehydrogenase [NAD(P)+]</fullName>
        <ecNumber evidence="1">1.1.1.94</ecNumber>
    </recommendedName>
    <alternativeName>
        <fullName evidence="1">NAD(P)(+)-dependent glycerol-3-phosphate dehydrogenase</fullName>
    </alternativeName>
    <alternativeName>
        <fullName evidence="1">NAD(P)H-dependent dihydroxyacetone-phosphate reductase</fullName>
    </alternativeName>
</protein>
<organism>
    <name type="scientific">Actinobacillus pleuropneumoniae serotype 5b (strain L20)</name>
    <dbReference type="NCBI Taxonomy" id="416269"/>
    <lineage>
        <taxon>Bacteria</taxon>
        <taxon>Pseudomonadati</taxon>
        <taxon>Pseudomonadota</taxon>
        <taxon>Gammaproteobacteria</taxon>
        <taxon>Pasteurellales</taxon>
        <taxon>Pasteurellaceae</taxon>
        <taxon>Actinobacillus</taxon>
    </lineage>
</organism>
<proteinExistence type="inferred from homology"/>
<comment type="function">
    <text evidence="1">Catalyzes the reduction of the glycolytic intermediate dihydroxyacetone phosphate (DHAP) to sn-glycerol 3-phosphate (G3P), the key precursor for phospholipid synthesis.</text>
</comment>
<comment type="catalytic activity">
    <reaction evidence="1">
        <text>sn-glycerol 3-phosphate + NAD(+) = dihydroxyacetone phosphate + NADH + H(+)</text>
        <dbReference type="Rhea" id="RHEA:11092"/>
        <dbReference type="ChEBI" id="CHEBI:15378"/>
        <dbReference type="ChEBI" id="CHEBI:57540"/>
        <dbReference type="ChEBI" id="CHEBI:57597"/>
        <dbReference type="ChEBI" id="CHEBI:57642"/>
        <dbReference type="ChEBI" id="CHEBI:57945"/>
        <dbReference type="EC" id="1.1.1.94"/>
    </reaction>
    <physiologicalReaction direction="right-to-left" evidence="1">
        <dbReference type="Rhea" id="RHEA:11094"/>
    </physiologicalReaction>
</comment>
<comment type="catalytic activity">
    <reaction evidence="1">
        <text>sn-glycerol 3-phosphate + NADP(+) = dihydroxyacetone phosphate + NADPH + H(+)</text>
        <dbReference type="Rhea" id="RHEA:11096"/>
        <dbReference type="ChEBI" id="CHEBI:15378"/>
        <dbReference type="ChEBI" id="CHEBI:57597"/>
        <dbReference type="ChEBI" id="CHEBI:57642"/>
        <dbReference type="ChEBI" id="CHEBI:57783"/>
        <dbReference type="ChEBI" id="CHEBI:58349"/>
        <dbReference type="EC" id="1.1.1.94"/>
    </reaction>
    <physiologicalReaction direction="right-to-left" evidence="1">
        <dbReference type="Rhea" id="RHEA:11098"/>
    </physiologicalReaction>
</comment>
<comment type="pathway">
    <text evidence="1">Membrane lipid metabolism; glycerophospholipid metabolism.</text>
</comment>
<comment type="subcellular location">
    <subcellularLocation>
        <location evidence="1">Cytoplasm</location>
    </subcellularLocation>
</comment>
<comment type="similarity">
    <text evidence="1">Belongs to the NAD-dependent glycerol-3-phosphate dehydrogenase family.</text>
</comment>
<feature type="chain" id="PRO_1000049478" description="Glycerol-3-phosphate dehydrogenase [NAD(P)+]">
    <location>
        <begin position="1"/>
        <end position="336"/>
    </location>
</feature>
<feature type="active site" description="Proton acceptor" evidence="1">
    <location>
        <position position="196"/>
    </location>
</feature>
<feature type="binding site" evidence="1">
    <location>
        <position position="16"/>
    </location>
    <ligand>
        <name>NADPH</name>
        <dbReference type="ChEBI" id="CHEBI:57783"/>
    </ligand>
</feature>
<feature type="binding site" evidence="1">
    <location>
        <position position="17"/>
    </location>
    <ligand>
        <name>NADPH</name>
        <dbReference type="ChEBI" id="CHEBI:57783"/>
    </ligand>
</feature>
<feature type="binding site" evidence="1">
    <location>
        <position position="37"/>
    </location>
    <ligand>
        <name>NADPH</name>
        <dbReference type="ChEBI" id="CHEBI:57783"/>
    </ligand>
</feature>
<feature type="binding site" evidence="1">
    <location>
        <position position="111"/>
    </location>
    <ligand>
        <name>NADPH</name>
        <dbReference type="ChEBI" id="CHEBI:57783"/>
    </ligand>
</feature>
<feature type="binding site" evidence="1">
    <location>
        <position position="111"/>
    </location>
    <ligand>
        <name>sn-glycerol 3-phosphate</name>
        <dbReference type="ChEBI" id="CHEBI:57597"/>
    </ligand>
</feature>
<feature type="binding site" evidence="1">
    <location>
        <position position="140"/>
    </location>
    <ligand>
        <name>sn-glycerol 3-phosphate</name>
        <dbReference type="ChEBI" id="CHEBI:57597"/>
    </ligand>
</feature>
<feature type="binding site" evidence="1">
    <location>
        <position position="142"/>
    </location>
    <ligand>
        <name>sn-glycerol 3-phosphate</name>
        <dbReference type="ChEBI" id="CHEBI:57597"/>
    </ligand>
</feature>
<feature type="binding site" evidence="1">
    <location>
        <position position="144"/>
    </location>
    <ligand>
        <name>NADPH</name>
        <dbReference type="ChEBI" id="CHEBI:57783"/>
    </ligand>
</feature>
<feature type="binding site" evidence="1">
    <location>
        <position position="196"/>
    </location>
    <ligand>
        <name>sn-glycerol 3-phosphate</name>
        <dbReference type="ChEBI" id="CHEBI:57597"/>
    </ligand>
</feature>
<feature type="binding site" evidence="1">
    <location>
        <position position="249"/>
    </location>
    <ligand>
        <name>sn-glycerol 3-phosphate</name>
        <dbReference type="ChEBI" id="CHEBI:57597"/>
    </ligand>
</feature>
<feature type="binding site" evidence="1">
    <location>
        <position position="259"/>
    </location>
    <ligand>
        <name>sn-glycerol 3-phosphate</name>
        <dbReference type="ChEBI" id="CHEBI:57597"/>
    </ligand>
</feature>
<feature type="binding site" evidence="1">
    <location>
        <position position="260"/>
    </location>
    <ligand>
        <name>NADPH</name>
        <dbReference type="ChEBI" id="CHEBI:57783"/>
    </ligand>
</feature>
<feature type="binding site" evidence="1">
    <location>
        <position position="260"/>
    </location>
    <ligand>
        <name>sn-glycerol 3-phosphate</name>
        <dbReference type="ChEBI" id="CHEBI:57597"/>
    </ligand>
</feature>
<feature type="binding site" evidence="1">
    <location>
        <position position="261"/>
    </location>
    <ligand>
        <name>sn-glycerol 3-phosphate</name>
        <dbReference type="ChEBI" id="CHEBI:57597"/>
    </ligand>
</feature>
<feature type="binding site" evidence="1">
    <location>
        <position position="284"/>
    </location>
    <ligand>
        <name>NADPH</name>
        <dbReference type="ChEBI" id="CHEBI:57783"/>
    </ligand>
</feature>
<feature type="binding site" evidence="1">
    <location>
        <position position="286"/>
    </location>
    <ligand>
        <name>NADPH</name>
        <dbReference type="ChEBI" id="CHEBI:57783"/>
    </ligand>
</feature>